<evidence type="ECO:0000250" key="1"/>
<evidence type="ECO:0000305" key="2"/>
<comment type="function">
    <text evidence="1">Component of the EKC/KEOPS complex that is required for the formation of a threonylcarbamoyl group on adenosine at position 37 (t(6)A37) in tRNAs that read codons beginning with adenine. The complex is probably involved in the transfer of the threonylcarbamoyl moiety of threonylcarbamoyl-AMP (TC-AMP) to the N6 group of A37. CGI121 acts as an allosteric effector that regulates the t(6)A activity of the complex. The EKC/KEOPS complex also promotes both telomere uncapping and telomere elongation. The complex is required for efficient recruitment of transcriptional coactivators. CGI121 is not required for tRNA modification (By similarity).</text>
</comment>
<comment type="subunit">
    <text evidence="1">Component of the EKC/KEOPS complex composed of at least BUD32, CGI121, GON7, KAE1 and PCC1; the whole complex dimerizes.</text>
</comment>
<comment type="subcellular location">
    <subcellularLocation>
        <location evidence="1">Nucleus</location>
    </subcellularLocation>
    <subcellularLocation>
        <location evidence="1">Chromosome</location>
        <location evidence="1">Telomere</location>
    </subcellularLocation>
</comment>
<comment type="similarity">
    <text evidence="2">Belongs to the CGI121/TPRKB family.</text>
</comment>
<feature type="chain" id="PRO_0000279204" description="EKC/KEOPS complex subunit CGI121">
    <location>
        <begin position="1"/>
        <end position="178"/>
    </location>
</feature>
<gene>
    <name type="primary">CGI121</name>
    <name type="ordered locus">ABR201W</name>
</gene>
<proteinExistence type="inferred from homology"/>
<protein>
    <recommendedName>
        <fullName>EKC/KEOPS complex subunit CGI121</fullName>
    </recommendedName>
</protein>
<keyword id="KW-0010">Activator</keyword>
<keyword id="KW-0158">Chromosome</keyword>
<keyword id="KW-0539">Nucleus</keyword>
<keyword id="KW-1185">Reference proteome</keyword>
<keyword id="KW-0779">Telomere</keyword>
<keyword id="KW-0804">Transcription</keyword>
<keyword id="KW-0805">Transcription regulation</keyword>
<keyword id="KW-0819">tRNA processing</keyword>
<organism>
    <name type="scientific">Eremothecium gossypii (strain ATCC 10895 / CBS 109.51 / FGSC 9923 / NRRL Y-1056)</name>
    <name type="common">Yeast</name>
    <name type="synonym">Ashbya gossypii</name>
    <dbReference type="NCBI Taxonomy" id="284811"/>
    <lineage>
        <taxon>Eukaryota</taxon>
        <taxon>Fungi</taxon>
        <taxon>Dikarya</taxon>
        <taxon>Ascomycota</taxon>
        <taxon>Saccharomycotina</taxon>
        <taxon>Saccharomycetes</taxon>
        <taxon>Saccharomycetales</taxon>
        <taxon>Saccharomycetaceae</taxon>
        <taxon>Eremothecium</taxon>
    </lineage>
</organism>
<name>CG121_EREGS</name>
<sequence length="178" mass="20069">MLTTTIPQFPDTKLYISLFRNVSNAPEIVDSLAELPYSIIDARTLLSREQLLSAVYRAMLEKHCNKLRTRNLHTEVLLCLSPTSNVMSQIGDAMKRFGIKKDSTSVVLVKAVTGDETFDPKGFSEVIRGEELEFSDTALRESADIDTIRENYKLKCFECERLEELSAALVHAIQLRGL</sequence>
<dbReference type="EMBL" id="AE016815">
    <property type="protein sequence ID" value="AAS50974.2"/>
    <property type="molecule type" value="Genomic_DNA"/>
</dbReference>
<dbReference type="RefSeq" id="NP_983150.2">
    <property type="nucleotide sequence ID" value="NM_208503.2"/>
</dbReference>
<dbReference type="SMR" id="Q75D21"/>
<dbReference type="FunCoup" id="Q75D21">
    <property type="interactions" value="524"/>
</dbReference>
<dbReference type="STRING" id="284811.Q75D21"/>
<dbReference type="EnsemblFungi" id="AAS50974">
    <property type="protein sequence ID" value="AAS50974"/>
    <property type="gene ID" value="AGOS_ABR201W"/>
</dbReference>
<dbReference type="GeneID" id="4619260"/>
<dbReference type="KEGG" id="ago:AGOS_ABR201W"/>
<dbReference type="eggNOG" id="KOG4066">
    <property type="taxonomic scope" value="Eukaryota"/>
</dbReference>
<dbReference type="HOGENOM" id="CLU_065847_1_1_1"/>
<dbReference type="InParanoid" id="Q75D21"/>
<dbReference type="OMA" id="IVCRMST"/>
<dbReference type="OrthoDB" id="329139at2759"/>
<dbReference type="Proteomes" id="UP000000591">
    <property type="component" value="Chromosome II"/>
</dbReference>
<dbReference type="GO" id="GO:0000781">
    <property type="term" value="C:chromosome, telomeric region"/>
    <property type="evidence" value="ECO:0007669"/>
    <property type="project" value="UniProtKB-SubCell"/>
</dbReference>
<dbReference type="GO" id="GO:0005829">
    <property type="term" value="C:cytosol"/>
    <property type="evidence" value="ECO:0000318"/>
    <property type="project" value="GO_Central"/>
</dbReference>
<dbReference type="GO" id="GO:0000408">
    <property type="term" value="C:EKC/KEOPS complex"/>
    <property type="evidence" value="ECO:0000318"/>
    <property type="project" value="GO_Central"/>
</dbReference>
<dbReference type="GO" id="GO:0005634">
    <property type="term" value="C:nucleus"/>
    <property type="evidence" value="ECO:0000318"/>
    <property type="project" value="GO_Central"/>
</dbReference>
<dbReference type="GO" id="GO:0000049">
    <property type="term" value="F:tRNA binding"/>
    <property type="evidence" value="ECO:0007669"/>
    <property type="project" value="EnsemblFungi"/>
</dbReference>
<dbReference type="GO" id="GO:0045944">
    <property type="term" value="P:positive regulation of transcription by RNA polymerase II"/>
    <property type="evidence" value="ECO:0007669"/>
    <property type="project" value="EnsemblFungi"/>
</dbReference>
<dbReference type="GO" id="GO:0000722">
    <property type="term" value="P:telomere maintenance via recombination"/>
    <property type="evidence" value="ECO:0007669"/>
    <property type="project" value="EnsemblFungi"/>
</dbReference>
<dbReference type="GO" id="GO:0002949">
    <property type="term" value="P:tRNA threonylcarbamoyladenosine modification"/>
    <property type="evidence" value="ECO:0000318"/>
    <property type="project" value="GO_Central"/>
</dbReference>
<dbReference type="Gene3D" id="3.30.2380.10">
    <property type="entry name" value="CGI121/TPRKB"/>
    <property type="match status" value="1"/>
</dbReference>
<dbReference type="InterPro" id="IPR013926">
    <property type="entry name" value="CGI121/TPRKB"/>
</dbReference>
<dbReference type="InterPro" id="IPR036504">
    <property type="entry name" value="CGI121/TPRKB_sf"/>
</dbReference>
<dbReference type="PANTHER" id="PTHR15840">
    <property type="entry name" value="CGI-121 FAMILY MEMBER"/>
    <property type="match status" value="1"/>
</dbReference>
<dbReference type="PANTHER" id="PTHR15840:SF10">
    <property type="entry name" value="EKC_KEOPS COMPLEX SUBUNIT TPRKB"/>
    <property type="match status" value="1"/>
</dbReference>
<dbReference type="Pfam" id="PF08617">
    <property type="entry name" value="CGI-121"/>
    <property type="match status" value="1"/>
</dbReference>
<dbReference type="SUPFAM" id="SSF143870">
    <property type="entry name" value="PF0523-like"/>
    <property type="match status" value="1"/>
</dbReference>
<reference key="1">
    <citation type="journal article" date="2004" name="Science">
        <title>The Ashbya gossypii genome as a tool for mapping the ancient Saccharomyces cerevisiae genome.</title>
        <authorList>
            <person name="Dietrich F.S."/>
            <person name="Voegeli S."/>
            <person name="Brachat S."/>
            <person name="Lerch A."/>
            <person name="Gates K."/>
            <person name="Steiner S."/>
            <person name="Mohr C."/>
            <person name="Poehlmann R."/>
            <person name="Luedi P."/>
            <person name="Choi S."/>
            <person name="Wing R.A."/>
            <person name="Flavier A."/>
            <person name="Gaffney T.D."/>
            <person name="Philippsen P."/>
        </authorList>
    </citation>
    <scope>NUCLEOTIDE SEQUENCE [LARGE SCALE GENOMIC DNA]</scope>
    <source>
        <strain>ATCC 10895 / CBS 109.51 / FGSC 9923 / NRRL Y-1056</strain>
    </source>
</reference>
<reference key="2">
    <citation type="journal article" date="2013" name="G3 (Bethesda)">
        <title>Genomes of Ashbya fungi isolated from insects reveal four mating-type loci, numerous translocations, lack of transposons, and distinct gene duplications.</title>
        <authorList>
            <person name="Dietrich F.S."/>
            <person name="Voegeli S."/>
            <person name="Kuo S."/>
            <person name="Philippsen P."/>
        </authorList>
    </citation>
    <scope>GENOME REANNOTATION</scope>
    <scope>SEQUENCE REVISION TO C-TERMINUS</scope>
    <source>
        <strain>ATCC 10895 / CBS 109.51 / FGSC 9923 / NRRL Y-1056</strain>
    </source>
</reference>
<accession>Q75D21</accession>